<reference key="1">
    <citation type="journal article" date="1988" name="Mol. Microbiol.">
        <title>Nucleotide sequence of the dmsABC operon encoding the anaerobic dimethylsulphoxide reductase of Escherichia coli.</title>
        <authorList>
            <person name="Bilous P.T."/>
            <person name="Cole S.T."/>
            <person name="Anderson W.F."/>
            <person name="Weiner J.H."/>
        </authorList>
    </citation>
    <scope>NUCLEOTIDE SEQUENCE [GENOMIC DNA]</scope>
    <source>
        <strain>K12 / C600 / CR34 / ATCC 23724 / DSM 3925 / LMG 3041 / NCIB 10222</strain>
    </source>
</reference>
<reference key="2">
    <citation type="journal article" date="1996" name="DNA Res.">
        <title>A 718-kb DNA sequence of the Escherichia coli K-12 genome corresponding to the 12.7-28.0 min region on the linkage map.</title>
        <authorList>
            <person name="Oshima T."/>
            <person name="Aiba H."/>
            <person name="Baba T."/>
            <person name="Fujita K."/>
            <person name="Hayashi K."/>
            <person name="Honjo A."/>
            <person name="Ikemoto K."/>
            <person name="Inada T."/>
            <person name="Itoh T."/>
            <person name="Kajihara M."/>
            <person name="Kanai K."/>
            <person name="Kashimoto K."/>
            <person name="Kimura S."/>
            <person name="Kitagawa M."/>
            <person name="Makino K."/>
            <person name="Masuda S."/>
            <person name="Miki T."/>
            <person name="Mizobuchi K."/>
            <person name="Mori H."/>
            <person name="Motomura K."/>
            <person name="Nakamura Y."/>
            <person name="Nashimoto H."/>
            <person name="Nishio Y."/>
            <person name="Saito N."/>
            <person name="Sampei G."/>
            <person name="Seki Y."/>
            <person name="Tagami H."/>
            <person name="Takemoto K."/>
            <person name="Wada C."/>
            <person name="Yamamoto Y."/>
            <person name="Yano M."/>
            <person name="Horiuchi T."/>
        </authorList>
    </citation>
    <scope>NUCLEOTIDE SEQUENCE [LARGE SCALE GENOMIC DNA]</scope>
    <source>
        <strain>K12 / W3110 / ATCC 27325 / DSM 5911</strain>
    </source>
</reference>
<reference key="3">
    <citation type="journal article" date="1997" name="Science">
        <title>The complete genome sequence of Escherichia coli K-12.</title>
        <authorList>
            <person name="Blattner F.R."/>
            <person name="Plunkett G. III"/>
            <person name="Bloch C.A."/>
            <person name="Perna N.T."/>
            <person name="Burland V."/>
            <person name="Riley M."/>
            <person name="Collado-Vides J."/>
            <person name="Glasner J.D."/>
            <person name="Rode C.K."/>
            <person name="Mayhew G.F."/>
            <person name="Gregor J."/>
            <person name="Davis N.W."/>
            <person name="Kirkpatrick H.A."/>
            <person name="Goeden M.A."/>
            <person name="Rose D.J."/>
            <person name="Mau B."/>
            <person name="Shao Y."/>
        </authorList>
    </citation>
    <scope>NUCLEOTIDE SEQUENCE [LARGE SCALE GENOMIC DNA]</scope>
    <source>
        <strain>K12 / MG1655 / ATCC 47076</strain>
    </source>
</reference>
<reference key="4">
    <citation type="journal article" date="2006" name="Mol. Syst. Biol.">
        <title>Highly accurate genome sequences of Escherichia coli K-12 strains MG1655 and W3110.</title>
        <authorList>
            <person name="Hayashi K."/>
            <person name="Morooka N."/>
            <person name="Yamamoto Y."/>
            <person name="Fujita K."/>
            <person name="Isono K."/>
            <person name="Choi S."/>
            <person name="Ohtsubo E."/>
            <person name="Baba T."/>
            <person name="Wanner B.L."/>
            <person name="Mori H."/>
            <person name="Horiuchi T."/>
        </authorList>
    </citation>
    <scope>NUCLEOTIDE SEQUENCE [LARGE SCALE GENOMIC DNA]</scope>
    <source>
        <strain>K12 / W3110 / ATCC 27325 / DSM 5911</strain>
    </source>
</reference>
<reference key="5">
    <citation type="journal article" date="1998" name="Structure">
        <title>The 1.8-A crystal structure of the ycaC gene product from Escherichia coli reveals an octameric hydrolase of unknown specificity.</title>
        <authorList>
            <person name="Colovos C."/>
            <person name="Cascio D."/>
            <person name="Yeates T.O."/>
        </authorList>
    </citation>
    <scope>X-RAY CRYSTALLOGRAPHY (1.8 ANGSTROMS)</scope>
    <scope>SUBUNIT</scope>
</reference>
<feature type="chain" id="PRO_0000168753" description="Probable hydrolase YcaC">
    <location>
        <begin position="1"/>
        <end position="208"/>
    </location>
</feature>
<feature type="active site" evidence="1">
    <location>
        <position position="118"/>
    </location>
</feature>
<feature type="strand" evidence="3">
    <location>
        <begin position="12"/>
        <end position="18"/>
    </location>
</feature>
<feature type="helix" evidence="3">
    <location>
        <begin position="24"/>
        <end position="27"/>
    </location>
</feature>
<feature type="helix" evidence="3">
    <location>
        <begin position="33"/>
        <end position="49"/>
    </location>
</feature>
<feature type="strand" evidence="3">
    <location>
        <begin position="54"/>
        <end position="60"/>
    </location>
</feature>
<feature type="turn" evidence="3">
    <location>
        <begin position="61"/>
        <end position="65"/>
    </location>
</feature>
<feature type="helix" evidence="3">
    <location>
        <begin position="70"/>
        <end position="75"/>
    </location>
</feature>
<feature type="strand" evidence="3">
    <location>
        <begin position="81"/>
        <end position="86"/>
    </location>
</feature>
<feature type="helix" evidence="3">
    <location>
        <begin position="90"/>
        <end position="92"/>
    </location>
</feature>
<feature type="helix" evidence="3">
    <location>
        <begin position="94"/>
        <end position="102"/>
    </location>
</feature>
<feature type="strand" evidence="3">
    <location>
        <begin position="106"/>
        <end position="114"/>
    </location>
</feature>
<feature type="helix" evidence="3">
    <location>
        <begin position="115"/>
        <end position="119"/>
    </location>
</feature>
<feature type="helix" evidence="3">
    <location>
        <begin position="120"/>
        <end position="128"/>
    </location>
</feature>
<feature type="strand" evidence="3">
    <location>
        <begin position="132"/>
        <end position="136"/>
    </location>
</feature>
<feature type="helix" evidence="3">
    <location>
        <begin position="145"/>
        <end position="158"/>
    </location>
</feature>
<feature type="strand" evidence="3">
    <location>
        <begin position="161"/>
        <end position="163"/>
    </location>
</feature>
<feature type="helix" evidence="3">
    <location>
        <begin position="165"/>
        <end position="173"/>
    </location>
</feature>
<feature type="helix" evidence="3">
    <location>
        <begin position="176"/>
        <end position="178"/>
    </location>
</feature>
<feature type="helix" evidence="3">
    <location>
        <begin position="180"/>
        <end position="190"/>
    </location>
</feature>
<feature type="helix" evidence="3">
    <location>
        <begin position="192"/>
        <end position="204"/>
    </location>
</feature>
<accession>P21367</accession>
<sequence length="208" mass="23100">MTKPYVRLDKNDAAVLLVDHQAGLLSLVRDIEPDKFKNNVLALGDLAKYFNLPTILTTSFETGPNGPLVPELKAQFPDTPYIARPGNINAWDNEDFVKAVKATGKKQLIIAGVVTEVCVAFPALSAIEEGFDVFVVTDASGTFNEITRHSAWDRLSQAGAQLMTWFGVACELHRDWRNDIEGLATLFSNHIPDYRNLMTSYDTLTKQK</sequence>
<proteinExistence type="evidence at protein level"/>
<evidence type="ECO:0000255" key="1"/>
<evidence type="ECO:0000269" key="2">
    <source>
    </source>
</evidence>
<evidence type="ECO:0007829" key="3">
    <source>
        <dbReference type="PDB" id="1YAC"/>
    </source>
</evidence>
<comment type="subunit">
    <text evidence="2">Homooctamer composed of two tetrameric rings.</text>
</comment>
<keyword id="KW-0002">3D-structure</keyword>
<keyword id="KW-0378">Hydrolase</keyword>
<keyword id="KW-0456">Lyase</keyword>
<keyword id="KW-1185">Reference proteome</keyword>
<organism>
    <name type="scientific">Escherichia coli (strain K12)</name>
    <dbReference type="NCBI Taxonomy" id="83333"/>
    <lineage>
        <taxon>Bacteria</taxon>
        <taxon>Pseudomonadati</taxon>
        <taxon>Pseudomonadota</taxon>
        <taxon>Gammaproteobacteria</taxon>
        <taxon>Enterobacterales</taxon>
        <taxon>Enterobacteriaceae</taxon>
        <taxon>Escherichia</taxon>
    </lineage>
</organism>
<name>YCAC_ECOLI</name>
<dbReference type="EC" id="4.-.-.-"/>
<dbReference type="EMBL" id="J03412">
    <property type="protein sequence ID" value="AAA83846.1"/>
    <property type="molecule type" value="Genomic_DNA"/>
</dbReference>
<dbReference type="EMBL" id="U00096">
    <property type="protein sequence ID" value="AAC73983.1"/>
    <property type="molecule type" value="Genomic_DNA"/>
</dbReference>
<dbReference type="EMBL" id="AP009048">
    <property type="protein sequence ID" value="BAA35629.1"/>
    <property type="molecule type" value="Genomic_DNA"/>
</dbReference>
<dbReference type="PIR" id="S09671">
    <property type="entry name" value="S09671"/>
</dbReference>
<dbReference type="RefSeq" id="NP_415417.1">
    <property type="nucleotide sequence ID" value="NC_000913.3"/>
</dbReference>
<dbReference type="RefSeq" id="WP_000165879.1">
    <property type="nucleotide sequence ID" value="NZ_SSZK01000002.1"/>
</dbReference>
<dbReference type="PDB" id="1YAC">
    <property type="method" value="X-ray"/>
    <property type="resolution" value="1.80 A"/>
    <property type="chains" value="A/B=1-208"/>
</dbReference>
<dbReference type="PDBsum" id="1YAC"/>
<dbReference type="SMR" id="P21367"/>
<dbReference type="BioGRID" id="4259587">
    <property type="interactions" value="17"/>
</dbReference>
<dbReference type="BioGRID" id="849886">
    <property type="interactions" value="1"/>
</dbReference>
<dbReference type="DIP" id="DIP-11462N"/>
<dbReference type="FunCoup" id="P21367">
    <property type="interactions" value="483"/>
</dbReference>
<dbReference type="IntAct" id="P21367">
    <property type="interactions" value="5"/>
</dbReference>
<dbReference type="STRING" id="511145.b0897"/>
<dbReference type="jPOST" id="P21367"/>
<dbReference type="PaxDb" id="511145-b0897"/>
<dbReference type="EnsemblBacteria" id="AAC73983">
    <property type="protein sequence ID" value="AAC73983"/>
    <property type="gene ID" value="b0897"/>
</dbReference>
<dbReference type="GeneID" id="945512"/>
<dbReference type="KEGG" id="ecj:JW0880"/>
<dbReference type="KEGG" id="eco:b0897"/>
<dbReference type="KEGG" id="ecoc:C3026_05545"/>
<dbReference type="PATRIC" id="fig|1411691.4.peg.1380"/>
<dbReference type="EchoBASE" id="EB1223"/>
<dbReference type="eggNOG" id="COG1335">
    <property type="taxonomic scope" value="Bacteria"/>
</dbReference>
<dbReference type="HOGENOM" id="CLU_066901_1_2_6"/>
<dbReference type="InParanoid" id="P21367"/>
<dbReference type="OMA" id="LTRQSAW"/>
<dbReference type="OrthoDB" id="5786063at2"/>
<dbReference type="PhylomeDB" id="P21367"/>
<dbReference type="BioCyc" id="EcoCyc:EG11241-MONOMER"/>
<dbReference type="EvolutionaryTrace" id="P21367"/>
<dbReference type="PRO" id="PR:P21367"/>
<dbReference type="Proteomes" id="UP000000625">
    <property type="component" value="Chromosome"/>
</dbReference>
<dbReference type="GO" id="GO:0005829">
    <property type="term" value="C:cytosol"/>
    <property type="evidence" value="ECO:0007005"/>
    <property type="project" value="UniProtKB"/>
</dbReference>
<dbReference type="GO" id="GO:0016020">
    <property type="term" value="C:membrane"/>
    <property type="evidence" value="ECO:0007005"/>
    <property type="project" value="UniProtKB"/>
</dbReference>
<dbReference type="GO" id="GO:0016787">
    <property type="term" value="F:hydrolase activity"/>
    <property type="evidence" value="ECO:0007669"/>
    <property type="project" value="UniProtKB-KW"/>
</dbReference>
<dbReference type="GO" id="GO:0042802">
    <property type="term" value="F:identical protein binding"/>
    <property type="evidence" value="ECO:0000314"/>
    <property type="project" value="EcoCyc"/>
</dbReference>
<dbReference type="GO" id="GO:0016829">
    <property type="term" value="F:lyase activity"/>
    <property type="evidence" value="ECO:0007669"/>
    <property type="project" value="UniProtKB-KW"/>
</dbReference>
<dbReference type="CDD" id="cd01012">
    <property type="entry name" value="YcaC_related"/>
    <property type="match status" value="1"/>
</dbReference>
<dbReference type="FunFam" id="3.40.50.850:FF:000003">
    <property type="entry name" value="Isochorismatase hydrolase"/>
    <property type="match status" value="1"/>
</dbReference>
<dbReference type="Gene3D" id="3.40.50.850">
    <property type="entry name" value="Isochorismatase-like"/>
    <property type="match status" value="1"/>
</dbReference>
<dbReference type="InterPro" id="IPR053152">
    <property type="entry name" value="Hydrolase_YcaC-like"/>
</dbReference>
<dbReference type="InterPro" id="IPR000868">
    <property type="entry name" value="Isochorismatase-like_dom"/>
</dbReference>
<dbReference type="InterPro" id="IPR036380">
    <property type="entry name" value="Isochorismatase-like_sf"/>
</dbReference>
<dbReference type="InterPro" id="IPR048239">
    <property type="entry name" value="YcaC"/>
</dbReference>
<dbReference type="NCBIfam" id="NF041461">
    <property type="entry name" value="C_hydro_YcaC"/>
    <property type="match status" value="1"/>
</dbReference>
<dbReference type="PANTHER" id="PTHR43559">
    <property type="entry name" value="HYDROLASE YCAC-RELATED"/>
    <property type="match status" value="1"/>
</dbReference>
<dbReference type="PANTHER" id="PTHR43559:SF3">
    <property type="entry name" value="HYDROLASE YCAC-RELATED"/>
    <property type="match status" value="1"/>
</dbReference>
<dbReference type="Pfam" id="PF00857">
    <property type="entry name" value="Isochorismatase"/>
    <property type="match status" value="1"/>
</dbReference>
<dbReference type="SUPFAM" id="SSF52499">
    <property type="entry name" value="Isochorismatase-like hydrolases"/>
    <property type="match status" value="1"/>
</dbReference>
<gene>
    <name type="primary">ycaC</name>
    <name type="ordered locus">b0897</name>
    <name type="ordered locus">JW0880</name>
</gene>
<protein>
    <recommendedName>
        <fullName>Probable hydrolase YcaC</fullName>
        <ecNumber>4.-.-.-</ecNumber>
    </recommendedName>
</protein>